<sequence>MEMEKRTPVLDGQGINTVLIRLAREIIQRHTNLEPLVIIGVHTRGVHLARRLADTIAEINGRAIPTGDIDITLYRDDWTKIGYSPVVQSTQIGFPIDDKTVILVDDVLFTGRTTRAALDALTDFGRPAKVELAVLVDREGMRELPIQADYVGMFVKTDKAEMVNVLLSETDGEDAVVVNTP</sequence>
<evidence type="ECO:0000255" key="1">
    <source>
        <dbReference type="HAMAP-Rule" id="MF_01219"/>
    </source>
</evidence>
<keyword id="KW-0328">Glycosyltransferase</keyword>
<keyword id="KW-1185">Reference proteome</keyword>
<keyword id="KW-0804">Transcription</keyword>
<keyword id="KW-0805">Transcription regulation</keyword>
<keyword id="KW-0808">Transferase</keyword>
<name>PYRR_DESOH</name>
<comment type="function">
    <text evidence="1">Regulates the transcription of the pyrimidine nucleotide (pyr) operon in response to exogenous pyrimidines.</text>
</comment>
<comment type="function">
    <text evidence="1">Also displays a weak uracil phosphoribosyltransferase activity which is not physiologically significant.</text>
</comment>
<comment type="catalytic activity">
    <reaction evidence="1">
        <text>UMP + diphosphate = 5-phospho-alpha-D-ribose 1-diphosphate + uracil</text>
        <dbReference type="Rhea" id="RHEA:13017"/>
        <dbReference type="ChEBI" id="CHEBI:17568"/>
        <dbReference type="ChEBI" id="CHEBI:33019"/>
        <dbReference type="ChEBI" id="CHEBI:57865"/>
        <dbReference type="ChEBI" id="CHEBI:58017"/>
        <dbReference type="EC" id="2.4.2.9"/>
    </reaction>
</comment>
<comment type="similarity">
    <text evidence="1">Belongs to the purine/pyrimidine phosphoribosyltransferase family. PyrR subfamily.</text>
</comment>
<proteinExistence type="inferred from homology"/>
<dbReference type="EC" id="2.4.2.9" evidence="1"/>
<dbReference type="EMBL" id="CP000859">
    <property type="protein sequence ID" value="ABW68998.1"/>
    <property type="molecule type" value="Genomic_DNA"/>
</dbReference>
<dbReference type="RefSeq" id="WP_012176608.1">
    <property type="nucleotide sequence ID" value="NC_009943.1"/>
</dbReference>
<dbReference type="SMR" id="A9A079"/>
<dbReference type="STRING" id="96561.Dole_3195"/>
<dbReference type="KEGG" id="dol:Dole_3195"/>
<dbReference type="eggNOG" id="COG2065">
    <property type="taxonomic scope" value="Bacteria"/>
</dbReference>
<dbReference type="HOGENOM" id="CLU_094234_2_1_7"/>
<dbReference type="OrthoDB" id="9802227at2"/>
<dbReference type="Proteomes" id="UP000008561">
    <property type="component" value="Chromosome"/>
</dbReference>
<dbReference type="GO" id="GO:0004845">
    <property type="term" value="F:uracil phosphoribosyltransferase activity"/>
    <property type="evidence" value="ECO:0007669"/>
    <property type="project" value="UniProtKB-UniRule"/>
</dbReference>
<dbReference type="GO" id="GO:0006355">
    <property type="term" value="P:regulation of DNA-templated transcription"/>
    <property type="evidence" value="ECO:0007669"/>
    <property type="project" value="UniProtKB-UniRule"/>
</dbReference>
<dbReference type="CDD" id="cd06223">
    <property type="entry name" value="PRTases_typeI"/>
    <property type="match status" value="1"/>
</dbReference>
<dbReference type="FunFam" id="3.40.50.2020:FF:000020">
    <property type="entry name" value="Bifunctional protein PyrR"/>
    <property type="match status" value="1"/>
</dbReference>
<dbReference type="Gene3D" id="3.40.50.2020">
    <property type="match status" value="1"/>
</dbReference>
<dbReference type="HAMAP" id="MF_01219">
    <property type="entry name" value="PyrR"/>
    <property type="match status" value="1"/>
</dbReference>
<dbReference type="InterPro" id="IPR000836">
    <property type="entry name" value="PRibTrfase_dom"/>
</dbReference>
<dbReference type="InterPro" id="IPR029057">
    <property type="entry name" value="PRTase-like"/>
</dbReference>
<dbReference type="InterPro" id="IPR023050">
    <property type="entry name" value="PyrR"/>
</dbReference>
<dbReference type="InterPro" id="IPR050137">
    <property type="entry name" value="PyrR_bifunctional"/>
</dbReference>
<dbReference type="NCBIfam" id="NF003545">
    <property type="entry name" value="PRK05205.1-1"/>
    <property type="match status" value="1"/>
</dbReference>
<dbReference type="NCBIfam" id="NF003549">
    <property type="entry name" value="PRK05205.1-5"/>
    <property type="match status" value="1"/>
</dbReference>
<dbReference type="PANTHER" id="PTHR11608">
    <property type="entry name" value="BIFUNCTIONAL PROTEIN PYRR"/>
    <property type="match status" value="1"/>
</dbReference>
<dbReference type="PANTHER" id="PTHR11608:SF0">
    <property type="entry name" value="BIFUNCTIONAL PROTEIN PYRR"/>
    <property type="match status" value="1"/>
</dbReference>
<dbReference type="Pfam" id="PF00156">
    <property type="entry name" value="Pribosyltran"/>
    <property type="match status" value="1"/>
</dbReference>
<dbReference type="SUPFAM" id="SSF53271">
    <property type="entry name" value="PRTase-like"/>
    <property type="match status" value="1"/>
</dbReference>
<gene>
    <name evidence="1" type="primary">pyrR</name>
    <name type="ordered locus">Dole_3195</name>
</gene>
<accession>A9A079</accession>
<feature type="chain" id="PRO_1000139195" description="Bifunctional protein PyrR">
    <location>
        <begin position="1"/>
        <end position="181"/>
    </location>
</feature>
<feature type="short sequence motif" description="PRPP-binding" evidence="1">
    <location>
        <begin position="101"/>
        <end position="113"/>
    </location>
</feature>
<protein>
    <recommendedName>
        <fullName evidence="1">Bifunctional protein PyrR</fullName>
    </recommendedName>
    <domain>
        <recommendedName>
            <fullName evidence="1">Pyrimidine operon regulatory protein</fullName>
        </recommendedName>
    </domain>
    <domain>
        <recommendedName>
            <fullName evidence="1">Uracil phosphoribosyltransferase</fullName>
            <shortName evidence="1">UPRTase</shortName>
            <ecNumber evidence="1">2.4.2.9</ecNumber>
        </recommendedName>
    </domain>
</protein>
<reference key="1">
    <citation type="submission" date="2007-10" db="EMBL/GenBank/DDBJ databases">
        <title>Complete sequence of Desulfococcus oleovorans Hxd3.</title>
        <authorList>
            <consortium name="US DOE Joint Genome Institute"/>
            <person name="Copeland A."/>
            <person name="Lucas S."/>
            <person name="Lapidus A."/>
            <person name="Barry K."/>
            <person name="Glavina del Rio T."/>
            <person name="Dalin E."/>
            <person name="Tice H."/>
            <person name="Pitluck S."/>
            <person name="Kiss H."/>
            <person name="Brettin T."/>
            <person name="Bruce D."/>
            <person name="Detter J.C."/>
            <person name="Han C."/>
            <person name="Schmutz J."/>
            <person name="Larimer F."/>
            <person name="Land M."/>
            <person name="Hauser L."/>
            <person name="Kyrpides N."/>
            <person name="Kim E."/>
            <person name="Wawrik B."/>
            <person name="Richardson P."/>
        </authorList>
    </citation>
    <scope>NUCLEOTIDE SEQUENCE [LARGE SCALE GENOMIC DNA]</scope>
    <source>
        <strain>DSM 6200 / JCM 39069 / Hxd3</strain>
    </source>
</reference>
<organism>
    <name type="scientific">Desulfosudis oleivorans (strain DSM 6200 / JCM 39069 / Hxd3)</name>
    <name type="common">Desulfococcus oleovorans</name>
    <dbReference type="NCBI Taxonomy" id="96561"/>
    <lineage>
        <taxon>Bacteria</taxon>
        <taxon>Pseudomonadati</taxon>
        <taxon>Thermodesulfobacteriota</taxon>
        <taxon>Desulfobacteria</taxon>
        <taxon>Desulfobacterales</taxon>
        <taxon>Desulfosudaceae</taxon>
        <taxon>Desulfosudis</taxon>
    </lineage>
</organism>